<evidence type="ECO:0000255" key="1">
    <source>
        <dbReference type="PROSITE-ProRule" id="PRU00042"/>
    </source>
</evidence>
<evidence type="ECO:0000255" key="2">
    <source>
        <dbReference type="PROSITE-ProRule" id="PRU00119"/>
    </source>
</evidence>
<evidence type="ECO:0000269" key="3">
    <source>
    </source>
</evidence>
<evidence type="ECO:0000269" key="4">
    <source>
    </source>
</evidence>
<evidence type="ECO:0000303" key="5">
    <source>
    </source>
</evidence>
<evidence type="ECO:0000303" key="6">
    <source>
    </source>
</evidence>
<evidence type="ECO:0000305" key="7"/>
<evidence type="ECO:0007744" key="8">
    <source>
    </source>
</evidence>
<dbReference type="EMBL" id="AK131368">
    <property type="protein sequence ID" value="BAD18519.1"/>
    <property type="molecule type" value="mRNA"/>
</dbReference>
<dbReference type="EMBL" id="AK131574">
    <property type="protein sequence ID" value="BAD18706.1"/>
    <property type="status" value="ALT_INIT"/>
    <property type="molecule type" value="mRNA"/>
</dbReference>
<dbReference type="EMBL" id="AK293074">
    <property type="protein sequence ID" value="BAF85763.1"/>
    <property type="molecule type" value="mRNA"/>
</dbReference>
<dbReference type="EMBL" id="AK304704">
    <property type="protein sequence ID" value="BAG65472.1"/>
    <property type="molecule type" value="mRNA"/>
</dbReference>
<dbReference type="EMBL" id="CR933598">
    <property type="protein sequence ID" value="CAI45923.1"/>
    <property type="molecule type" value="mRNA"/>
</dbReference>
<dbReference type="EMBL" id="BX640767">
    <property type="protein sequence ID" value="CAI46258.1"/>
    <property type="molecule type" value="mRNA"/>
</dbReference>
<dbReference type="EMBL" id="AC008813">
    <property type="status" value="NOT_ANNOTATED_CDS"/>
    <property type="molecule type" value="Genomic_DNA"/>
</dbReference>
<dbReference type="EMBL" id="BC140720">
    <property type="protein sequence ID" value="AAI40721.1"/>
    <property type="molecule type" value="mRNA"/>
</dbReference>
<dbReference type="EMBL" id="X52355">
    <property type="protein sequence ID" value="CAA36581.1"/>
    <property type="molecule type" value="mRNA"/>
</dbReference>
<dbReference type="CCDS" id="CCDS33093.2">
    <molecule id="P17035-1"/>
</dbReference>
<dbReference type="CCDS" id="CCDS92676.1">
    <molecule id="P17035-2"/>
</dbReference>
<dbReference type="PIR" id="I37964">
    <property type="entry name" value="I37964"/>
</dbReference>
<dbReference type="RefSeq" id="NP_001356691.1">
    <molecule id="P17035-2"/>
    <property type="nucleotide sequence ID" value="NM_001369762.1"/>
</dbReference>
<dbReference type="RefSeq" id="NP_008900.3">
    <molecule id="P17035-1"/>
    <property type="nucleotide sequence ID" value="NM_006969.5"/>
</dbReference>
<dbReference type="RefSeq" id="XP_011525564.1">
    <property type="nucleotide sequence ID" value="XM_011527262.2"/>
</dbReference>
<dbReference type="SMR" id="P17035"/>
<dbReference type="BioGRID" id="113406">
    <property type="interactions" value="9"/>
</dbReference>
<dbReference type="FunCoup" id="P17035">
    <property type="interactions" value="77"/>
</dbReference>
<dbReference type="IntAct" id="P17035">
    <property type="interactions" value="5"/>
</dbReference>
<dbReference type="STRING" id="9606.ENSP00000397693"/>
<dbReference type="GlyGen" id="P17035">
    <property type="glycosylation" value="1 site, 1 O-linked glycan (1 site)"/>
</dbReference>
<dbReference type="iPTMnet" id="P17035"/>
<dbReference type="PhosphoSitePlus" id="P17035"/>
<dbReference type="BioMuta" id="ZNF28"/>
<dbReference type="DMDM" id="313104321"/>
<dbReference type="jPOST" id="P17035"/>
<dbReference type="MassIVE" id="P17035"/>
<dbReference type="PaxDb" id="9606-ENSP00000397693"/>
<dbReference type="PeptideAtlas" id="P17035"/>
<dbReference type="ProteomicsDB" id="53436">
    <molecule id="P17035-1"/>
</dbReference>
<dbReference type="ProteomicsDB" id="53437">
    <molecule id="P17035-2"/>
</dbReference>
<dbReference type="Antibodypedia" id="56951">
    <property type="antibodies" value="60 antibodies from 12 providers"/>
</dbReference>
<dbReference type="DNASU" id="7576"/>
<dbReference type="Ensembl" id="ENST00000438150.2">
    <molecule id="P17035-2"/>
    <property type="protein sequence ID" value="ENSP00000412143.2"/>
    <property type="gene ID" value="ENSG00000198538.11"/>
</dbReference>
<dbReference type="Ensembl" id="ENST00000457749.7">
    <molecule id="P17035-1"/>
    <property type="protein sequence ID" value="ENSP00000397693.2"/>
    <property type="gene ID" value="ENSG00000198538.11"/>
</dbReference>
<dbReference type="GeneID" id="7576"/>
<dbReference type="KEGG" id="hsa:7576"/>
<dbReference type="MANE-Select" id="ENST00000457749.7">
    <property type="protein sequence ID" value="ENSP00000397693.2"/>
    <property type="RefSeq nucleotide sequence ID" value="NM_006969.5"/>
    <property type="RefSeq protein sequence ID" value="NP_008900.3"/>
</dbReference>
<dbReference type="UCSC" id="uc002qad.4">
    <molecule id="P17035-1"/>
    <property type="organism name" value="human"/>
</dbReference>
<dbReference type="AGR" id="HGNC:13073"/>
<dbReference type="CTD" id="7576"/>
<dbReference type="GeneCards" id="ZNF28"/>
<dbReference type="HGNC" id="HGNC:13073">
    <property type="gene designation" value="ZNF28"/>
</dbReference>
<dbReference type="HPA" id="ENSG00000198538">
    <property type="expression patterns" value="Low tissue specificity"/>
</dbReference>
<dbReference type="MIM" id="620466">
    <property type="type" value="gene"/>
</dbReference>
<dbReference type="neXtProt" id="NX_P17035"/>
<dbReference type="OpenTargets" id="ENSG00000198538"/>
<dbReference type="PharmGKB" id="PA37649"/>
<dbReference type="VEuPathDB" id="HostDB:ENSG00000198538"/>
<dbReference type="eggNOG" id="KOG1721">
    <property type="taxonomic scope" value="Eukaryota"/>
</dbReference>
<dbReference type="GeneTree" id="ENSGT00940000165246"/>
<dbReference type="HOGENOM" id="CLU_002678_17_1_1"/>
<dbReference type="InParanoid" id="P17035"/>
<dbReference type="OMA" id="ASQRICC"/>
<dbReference type="OrthoDB" id="3437960at2759"/>
<dbReference type="PAN-GO" id="P17035">
    <property type="GO annotations" value="4 GO annotations based on evolutionary models"/>
</dbReference>
<dbReference type="PhylomeDB" id="P17035"/>
<dbReference type="TreeFam" id="TF341892"/>
<dbReference type="PathwayCommons" id="P17035"/>
<dbReference type="Reactome" id="R-HSA-212436">
    <property type="pathway name" value="Generic Transcription Pathway"/>
</dbReference>
<dbReference type="Reactome" id="R-HSA-9843940">
    <property type="pathway name" value="Regulation of endogenous retroelements by KRAB-ZFP proteins"/>
</dbReference>
<dbReference type="SignaLink" id="P17035"/>
<dbReference type="BioGRID-ORCS" id="7576">
    <property type="hits" value="10 hits in 1144 CRISPR screens"/>
</dbReference>
<dbReference type="ChiTaRS" id="ZNF28">
    <property type="organism name" value="human"/>
</dbReference>
<dbReference type="GenomeRNAi" id="7576"/>
<dbReference type="Pharos" id="P17035">
    <property type="development level" value="Tdark"/>
</dbReference>
<dbReference type="PRO" id="PR:P17035"/>
<dbReference type="Proteomes" id="UP000005640">
    <property type="component" value="Chromosome 19"/>
</dbReference>
<dbReference type="RNAct" id="P17035">
    <property type="molecule type" value="protein"/>
</dbReference>
<dbReference type="Bgee" id="ENSG00000198538">
    <property type="expression patterns" value="Expressed in adrenal tissue and 108 other cell types or tissues"/>
</dbReference>
<dbReference type="ExpressionAtlas" id="P17035">
    <property type="expression patterns" value="baseline and differential"/>
</dbReference>
<dbReference type="GO" id="GO:0005634">
    <property type="term" value="C:nucleus"/>
    <property type="evidence" value="ECO:0000318"/>
    <property type="project" value="GO_Central"/>
</dbReference>
<dbReference type="GO" id="GO:0000981">
    <property type="term" value="F:DNA-binding transcription factor activity, RNA polymerase II-specific"/>
    <property type="evidence" value="ECO:0000318"/>
    <property type="project" value="GO_Central"/>
</dbReference>
<dbReference type="GO" id="GO:0000978">
    <property type="term" value="F:RNA polymerase II cis-regulatory region sequence-specific DNA binding"/>
    <property type="evidence" value="ECO:0000318"/>
    <property type="project" value="GO_Central"/>
</dbReference>
<dbReference type="GO" id="GO:0008270">
    <property type="term" value="F:zinc ion binding"/>
    <property type="evidence" value="ECO:0007669"/>
    <property type="project" value="UniProtKB-KW"/>
</dbReference>
<dbReference type="GO" id="GO:0006357">
    <property type="term" value="P:regulation of transcription by RNA polymerase II"/>
    <property type="evidence" value="ECO:0000318"/>
    <property type="project" value="GO_Central"/>
</dbReference>
<dbReference type="CDD" id="cd07765">
    <property type="entry name" value="KRAB_A-box"/>
    <property type="match status" value="1"/>
</dbReference>
<dbReference type="FunFam" id="3.30.160.60:FF:004137">
    <property type="match status" value="2"/>
</dbReference>
<dbReference type="FunFam" id="3.30.160.60:FF:000189">
    <property type="entry name" value="zinc finger protein 133 isoform X1"/>
    <property type="match status" value="1"/>
</dbReference>
<dbReference type="FunFam" id="3.30.160.60:FF:000745">
    <property type="entry name" value="zinc finger protein 181 isoform X1"/>
    <property type="match status" value="2"/>
</dbReference>
<dbReference type="FunFam" id="3.30.160.60:FF:001708">
    <property type="entry name" value="Zinc finger protein 251"/>
    <property type="match status" value="1"/>
</dbReference>
<dbReference type="FunFam" id="3.30.160.60:FF:000622">
    <property type="entry name" value="zinc finger protein 26 isoform X3"/>
    <property type="match status" value="1"/>
</dbReference>
<dbReference type="FunFam" id="3.30.160.60:FF:001181">
    <property type="entry name" value="Zinc finger protein 311"/>
    <property type="match status" value="1"/>
</dbReference>
<dbReference type="FunFam" id="3.30.160.60:FF:000992">
    <property type="entry name" value="Zinc finger protein 320"/>
    <property type="match status" value="2"/>
</dbReference>
<dbReference type="FunFam" id="3.30.160.60:FF:002402">
    <property type="entry name" value="Zinc finger protein 347"/>
    <property type="match status" value="2"/>
</dbReference>
<dbReference type="FunFam" id="3.30.160.60:FF:001910">
    <property type="entry name" value="zinc finger protein 420 isoform X3"/>
    <property type="match status" value="1"/>
</dbReference>
<dbReference type="FunFam" id="3.30.160.60:FF:001552">
    <property type="entry name" value="Zinc finger protein 425"/>
    <property type="match status" value="1"/>
</dbReference>
<dbReference type="FunFam" id="3.30.160.60:FF:002254">
    <property type="entry name" value="Zinc finger protein 540"/>
    <property type="match status" value="1"/>
</dbReference>
<dbReference type="FunFam" id="3.30.160.60:FF:000015">
    <property type="entry name" value="Zinc finger protein 569"/>
    <property type="match status" value="1"/>
</dbReference>
<dbReference type="FunFam" id="3.30.160.60:FF:000149">
    <property type="entry name" value="Zinc finger protein 569"/>
    <property type="match status" value="2"/>
</dbReference>
<dbReference type="FunFam" id="3.30.160.60:FF:002289">
    <property type="entry name" value="Zinc finger protein 813"/>
    <property type="match status" value="1"/>
</dbReference>
<dbReference type="FunFam" id="3.30.160.60:FF:000416">
    <property type="entry name" value="zinc finger protein 879 isoform X1"/>
    <property type="match status" value="1"/>
</dbReference>
<dbReference type="Gene3D" id="6.10.140.140">
    <property type="match status" value="1"/>
</dbReference>
<dbReference type="Gene3D" id="3.30.160.60">
    <property type="entry name" value="Classic Zinc Finger"/>
    <property type="match status" value="18"/>
</dbReference>
<dbReference type="InterPro" id="IPR001909">
    <property type="entry name" value="KRAB"/>
</dbReference>
<dbReference type="InterPro" id="IPR036051">
    <property type="entry name" value="KRAB_dom_sf"/>
</dbReference>
<dbReference type="InterPro" id="IPR036236">
    <property type="entry name" value="Znf_C2H2_sf"/>
</dbReference>
<dbReference type="InterPro" id="IPR013087">
    <property type="entry name" value="Znf_C2H2_type"/>
</dbReference>
<dbReference type="PANTHER" id="PTHR24399:SF71">
    <property type="entry name" value="NOVEL KRAB BOX AND ZINC FINGER, C2H2 TYPE DOMAIN CONTAINING PROTEIN-RELATED"/>
    <property type="match status" value="1"/>
</dbReference>
<dbReference type="PANTHER" id="PTHR24399">
    <property type="entry name" value="ZINC FINGER AND BTB DOMAIN-CONTAINING"/>
    <property type="match status" value="1"/>
</dbReference>
<dbReference type="Pfam" id="PF01352">
    <property type="entry name" value="KRAB"/>
    <property type="match status" value="1"/>
</dbReference>
<dbReference type="Pfam" id="PF00096">
    <property type="entry name" value="zf-C2H2"/>
    <property type="match status" value="14"/>
</dbReference>
<dbReference type="Pfam" id="PF13465">
    <property type="entry name" value="zf-H2C2_2"/>
    <property type="match status" value="1"/>
</dbReference>
<dbReference type="SMART" id="SM00349">
    <property type="entry name" value="KRAB"/>
    <property type="match status" value="1"/>
</dbReference>
<dbReference type="SMART" id="SM00355">
    <property type="entry name" value="ZnF_C2H2"/>
    <property type="match status" value="18"/>
</dbReference>
<dbReference type="SUPFAM" id="SSF57667">
    <property type="entry name" value="beta-beta-alpha zinc fingers"/>
    <property type="match status" value="10"/>
</dbReference>
<dbReference type="SUPFAM" id="SSF109640">
    <property type="entry name" value="KRAB domain (Kruppel-associated box)"/>
    <property type="match status" value="1"/>
</dbReference>
<dbReference type="PROSITE" id="PS50805">
    <property type="entry name" value="KRAB"/>
    <property type="match status" value="1"/>
</dbReference>
<dbReference type="PROSITE" id="PS00028">
    <property type="entry name" value="ZINC_FINGER_C2H2_1"/>
    <property type="match status" value="15"/>
</dbReference>
<dbReference type="PROSITE" id="PS50157">
    <property type="entry name" value="ZINC_FINGER_C2H2_2"/>
    <property type="match status" value="18"/>
</dbReference>
<protein>
    <recommendedName>
        <fullName>Zinc finger protein 28</fullName>
    </recommendedName>
    <alternativeName>
        <fullName>Zinc finger protein KOX24</fullName>
    </alternativeName>
</protein>
<gene>
    <name type="primary">ZNF28</name>
    <name type="synonym">KOX24</name>
</gene>
<sequence>MALPQGLLTFRDVAIEFSQEEWKCLDPAQRTLYRDVMLENYRNLVSLDISSKCMMKTFFSTGQGNTEAFHTGTLQRQASHHIGDFCFQKIEKDIHGFQFQWKEDETNDHAAPMTEIKELTGSTGQHDQRHAGNKHIKDQLGLSFHSHLPELHIFQPEGKIGNQVEKSINNASSVSTSQRICCRPKTHISNKYGNNSLHSSLLTQKRNVHMREKSFQCIESGKSFNCSSLLKKHQITHLEEKQCKCDVYGKVFNQKRYLACHRRSHIDEKPYKCNECGKIFGHNTSLFLHKALHTADKPYECEECDKVFSRKSHLETHKIIYTGGKPYKCKVCDKAFTCNSYLAKHTIIHTGEKPYKCNECGKVFNRLSTLARHRRLHTGEKPYECEECEKVFSRKSHLERHKRIHTGEKPYKCKVCDKAFAYNSYLAKHSIIHTGEKPYKCNECGKVFNQQSTLARHHRLHTAEKPYKCEECDKVFRCKSHLERHRRIHTGEKPYKCKVCDKAFRSDSCLTEHQRVHTGEKPYMCNECGKVFSTKANLACHHKLHTAEKPYKCEECEKVFSRKSHMERHRRIHTGEKPYKCKVCDKAFRRDSHLAQHQRVHTGEKPYKCNECGKTFRQTSSLIIHRRLHTGEKPYKCNECGKTFSQMSSLVYHHRLHSGEKPYKCNECGKVFNQQAHLAQHQRVHTGEKPYKCNECGKTFSQMSNLVYHHRLHSGEKP</sequence>
<reference key="1">
    <citation type="journal article" date="2004" name="Nat. Genet.">
        <title>Complete sequencing and characterization of 21,243 full-length human cDNAs.</title>
        <authorList>
            <person name="Ota T."/>
            <person name="Suzuki Y."/>
            <person name="Nishikawa T."/>
            <person name="Otsuki T."/>
            <person name="Sugiyama T."/>
            <person name="Irie R."/>
            <person name="Wakamatsu A."/>
            <person name="Hayashi K."/>
            <person name="Sato H."/>
            <person name="Nagai K."/>
            <person name="Kimura K."/>
            <person name="Makita H."/>
            <person name="Sekine M."/>
            <person name="Obayashi M."/>
            <person name="Nishi T."/>
            <person name="Shibahara T."/>
            <person name="Tanaka T."/>
            <person name="Ishii S."/>
            <person name="Yamamoto J."/>
            <person name="Saito K."/>
            <person name="Kawai Y."/>
            <person name="Isono Y."/>
            <person name="Nakamura Y."/>
            <person name="Nagahari K."/>
            <person name="Murakami K."/>
            <person name="Yasuda T."/>
            <person name="Iwayanagi T."/>
            <person name="Wagatsuma M."/>
            <person name="Shiratori A."/>
            <person name="Sudo H."/>
            <person name="Hosoiri T."/>
            <person name="Kaku Y."/>
            <person name="Kodaira H."/>
            <person name="Kondo H."/>
            <person name="Sugawara M."/>
            <person name="Takahashi M."/>
            <person name="Kanda K."/>
            <person name="Yokoi T."/>
            <person name="Furuya T."/>
            <person name="Kikkawa E."/>
            <person name="Omura Y."/>
            <person name="Abe K."/>
            <person name="Kamihara K."/>
            <person name="Katsuta N."/>
            <person name="Sato K."/>
            <person name="Tanikawa M."/>
            <person name="Yamazaki M."/>
            <person name="Ninomiya K."/>
            <person name="Ishibashi T."/>
            <person name="Yamashita H."/>
            <person name="Murakawa K."/>
            <person name="Fujimori K."/>
            <person name="Tanai H."/>
            <person name="Kimata M."/>
            <person name="Watanabe M."/>
            <person name="Hiraoka S."/>
            <person name="Chiba Y."/>
            <person name="Ishida S."/>
            <person name="Ono Y."/>
            <person name="Takiguchi S."/>
            <person name="Watanabe S."/>
            <person name="Yosida M."/>
            <person name="Hotuta T."/>
            <person name="Kusano J."/>
            <person name="Kanehori K."/>
            <person name="Takahashi-Fujii A."/>
            <person name="Hara H."/>
            <person name="Tanase T.-O."/>
            <person name="Nomura Y."/>
            <person name="Togiya S."/>
            <person name="Komai F."/>
            <person name="Hara R."/>
            <person name="Takeuchi K."/>
            <person name="Arita M."/>
            <person name="Imose N."/>
            <person name="Musashino K."/>
            <person name="Yuuki H."/>
            <person name="Oshima A."/>
            <person name="Sasaki N."/>
            <person name="Aotsuka S."/>
            <person name="Yoshikawa Y."/>
            <person name="Matsunawa H."/>
            <person name="Ichihara T."/>
            <person name="Shiohata N."/>
            <person name="Sano S."/>
            <person name="Moriya S."/>
            <person name="Momiyama H."/>
            <person name="Satoh N."/>
            <person name="Takami S."/>
            <person name="Terashima Y."/>
            <person name="Suzuki O."/>
            <person name="Nakagawa S."/>
            <person name="Senoh A."/>
            <person name="Mizoguchi H."/>
            <person name="Goto Y."/>
            <person name="Shimizu F."/>
            <person name="Wakebe H."/>
            <person name="Hishigaki H."/>
            <person name="Watanabe T."/>
            <person name="Sugiyama A."/>
            <person name="Takemoto M."/>
            <person name="Kawakami B."/>
            <person name="Yamazaki M."/>
            <person name="Watanabe K."/>
            <person name="Kumagai A."/>
            <person name="Itakura S."/>
            <person name="Fukuzumi Y."/>
            <person name="Fujimori Y."/>
            <person name="Komiyama M."/>
            <person name="Tashiro H."/>
            <person name="Tanigami A."/>
            <person name="Fujiwara T."/>
            <person name="Ono T."/>
            <person name="Yamada K."/>
            <person name="Fujii Y."/>
            <person name="Ozaki K."/>
            <person name="Hirao M."/>
            <person name="Ohmori Y."/>
            <person name="Kawabata A."/>
            <person name="Hikiji T."/>
            <person name="Kobatake N."/>
            <person name="Inagaki H."/>
            <person name="Ikema Y."/>
            <person name="Okamoto S."/>
            <person name="Okitani R."/>
            <person name="Kawakami T."/>
            <person name="Noguchi S."/>
            <person name="Itoh T."/>
            <person name="Shigeta K."/>
            <person name="Senba T."/>
            <person name="Matsumura K."/>
            <person name="Nakajima Y."/>
            <person name="Mizuno T."/>
            <person name="Morinaga M."/>
            <person name="Sasaki M."/>
            <person name="Togashi T."/>
            <person name="Oyama M."/>
            <person name="Hata H."/>
            <person name="Watanabe M."/>
            <person name="Komatsu T."/>
            <person name="Mizushima-Sugano J."/>
            <person name="Satoh T."/>
            <person name="Shirai Y."/>
            <person name="Takahashi Y."/>
            <person name="Nakagawa K."/>
            <person name="Okumura K."/>
            <person name="Nagase T."/>
            <person name="Nomura N."/>
            <person name="Kikuchi H."/>
            <person name="Masuho Y."/>
            <person name="Yamashita R."/>
            <person name="Nakai K."/>
            <person name="Yada T."/>
            <person name="Nakamura Y."/>
            <person name="Ohara O."/>
            <person name="Isogai T."/>
            <person name="Sugano S."/>
        </authorList>
    </citation>
    <scope>NUCLEOTIDE SEQUENCE [LARGE SCALE MRNA] (ISOFORMS 1 AND 2)</scope>
    <scope>VARIANTS GLN-465 AND THR-524</scope>
    <source>
        <tissue>Cerebellum</tissue>
        <tissue>Uterus</tissue>
    </source>
</reference>
<reference key="2">
    <citation type="journal article" date="2007" name="BMC Genomics">
        <title>The full-ORF clone resource of the German cDNA consortium.</title>
        <authorList>
            <person name="Bechtel S."/>
            <person name="Rosenfelder H."/>
            <person name="Duda A."/>
            <person name="Schmidt C.P."/>
            <person name="Ernst U."/>
            <person name="Wellenreuther R."/>
            <person name="Mehrle A."/>
            <person name="Schuster C."/>
            <person name="Bahr A."/>
            <person name="Bloecker H."/>
            <person name="Heubner D."/>
            <person name="Hoerlein A."/>
            <person name="Michel G."/>
            <person name="Wedler H."/>
            <person name="Koehrer K."/>
            <person name="Ottenwaelder B."/>
            <person name="Poustka A."/>
            <person name="Wiemann S."/>
            <person name="Schupp I."/>
        </authorList>
    </citation>
    <scope>NUCLEOTIDE SEQUENCE [LARGE SCALE MRNA] (ISOFORM 1)</scope>
    <scope>VARIANTS GLN-465 AND THR-524</scope>
    <source>
        <tissue>Rectum tumor</tissue>
        <tissue>Seminoma</tissue>
    </source>
</reference>
<reference key="3">
    <citation type="journal article" date="2004" name="Nature">
        <title>The DNA sequence and biology of human chromosome 19.</title>
        <authorList>
            <person name="Grimwood J."/>
            <person name="Gordon L.A."/>
            <person name="Olsen A.S."/>
            <person name="Terry A."/>
            <person name="Schmutz J."/>
            <person name="Lamerdin J.E."/>
            <person name="Hellsten U."/>
            <person name="Goodstein D."/>
            <person name="Couronne O."/>
            <person name="Tran-Gyamfi M."/>
            <person name="Aerts A."/>
            <person name="Altherr M."/>
            <person name="Ashworth L."/>
            <person name="Bajorek E."/>
            <person name="Black S."/>
            <person name="Branscomb E."/>
            <person name="Caenepeel S."/>
            <person name="Carrano A.V."/>
            <person name="Caoile C."/>
            <person name="Chan Y.M."/>
            <person name="Christensen M."/>
            <person name="Cleland C.A."/>
            <person name="Copeland A."/>
            <person name="Dalin E."/>
            <person name="Dehal P."/>
            <person name="Denys M."/>
            <person name="Detter J.C."/>
            <person name="Escobar J."/>
            <person name="Flowers D."/>
            <person name="Fotopulos D."/>
            <person name="Garcia C."/>
            <person name="Georgescu A.M."/>
            <person name="Glavina T."/>
            <person name="Gomez M."/>
            <person name="Gonzales E."/>
            <person name="Groza M."/>
            <person name="Hammon N."/>
            <person name="Hawkins T."/>
            <person name="Haydu L."/>
            <person name="Ho I."/>
            <person name="Huang W."/>
            <person name="Israni S."/>
            <person name="Jett J."/>
            <person name="Kadner K."/>
            <person name="Kimball H."/>
            <person name="Kobayashi A."/>
            <person name="Larionov V."/>
            <person name="Leem S.-H."/>
            <person name="Lopez F."/>
            <person name="Lou Y."/>
            <person name="Lowry S."/>
            <person name="Malfatti S."/>
            <person name="Martinez D."/>
            <person name="McCready P.M."/>
            <person name="Medina C."/>
            <person name="Morgan J."/>
            <person name="Nelson K."/>
            <person name="Nolan M."/>
            <person name="Ovcharenko I."/>
            <person name="Pitluck S."/>
            <person name="Pollard M."/>
            <person name="Popkie A.P."/>
            <person name="Predki P."/>
            <person name="Quan G."/>
            <person name="Ramirez L."/>
            <person name="Rash S."/>
            <person name="Retterer J."/>
            <person name="Rodriguez A."/>
            <person name="Rogers S."/>
            <person name="Salamov A."/>
            <person name="Salazar A."/>
            <person name="She X."/>
            <person name="Smith D."/>
            <person name="Slezak T."/>
            <person name="Solovyev V."/>
            <person name="Thayer N."/>
            <person name="Tice H."/>
            <person name="Tsai M."/>
            <person name="Ustaszewska A."/>
            <person name="Vo N."/>
            <person name="Wagner M."/>
            <person name="Wheeler J."/>
            <person name="Wu K."/>
            <person name="Xie G."/>
            <person name="Yang J."/>
            <person name="Dubchak I."/>
            <person name="Furey T.S."/>
            <person name="DeJong P."/>
            <person name="Dickson M."/>
            <person name="Gordon D."/>
            <person name="Eichler E.E."/>
            <person name="Pennacchio L.A."/>
            <person name="Richardson P."/>
            <person name="Stubbs L."/>
            <person name="Rokhsar D.S."/>
            <person name="Myers R.M."/>
            <person name="Rubin E.M."/>
            <person name="Lucas S.M."/>
        </authorList>
    </citation>
    <scope>NUCLEOTIDE SEQUENCE [LARGE SCALE GENOMIC DNA]</scope>
</reference>
<reference key="4">
    <citation type="journal article" date="2004" name="Genome Res.">
        <title>The status, quality, and expansion of the NIH full-length cDNA project: the Mammalian Gene Collection (MGC).</title>
        <authorList>
            <consortium name="The MGC Project Team"/>
        </authorList>
    </citation>
    <scope>NUCLEOTIDE SEQUENCE [LARGE SCALE MRNA] (ISOFORM 2)</scope>
    <source>
        <tissue>Brain</tissue>
    </source>
</reference>
<reference key="5">
    <citation type="journal article" date="1990" name="New Biol.">
        <title>Multiple genes encoding zinc finger domains are expressed in human T cells.</title>
        <authorList>
            <person name="Thiesen H.-J."/>
        </authorList>
    </citation>
    <scope>NUCLEOTIDE SEQUENCE [MRNA] OF 215-270 (ISOFORMS 1/2)</scope>
    <source>
        <tissue>Lymphoid tissue</tissue>
    </source>
</reference>
<reference key="6">
    <citation type="journal article" date="2017" name="Nat. Struct. Mol. Biol.">
        <title>Site-specific mapping of the human SUMO proteome reveals co-modification with phosphorylation.</title>
        <authorList>
            <person name="Hendriks I.A."/>
            <person name="Lyon D."/>
            <person name="Young C."/>
            <person name="Jensen L.J."/>
            <person name="Vertegaal A.C."/>
            <person name="Nielsen M.L."/>
        </authorList>
    </citation>
    <scope>SUMOYLATION [LARGE SCALE ANALYSIS] AT LYS-89 AND LYS-428</scope>
    <scope>IDENTIFICATION BY MASS SPECTROMETRY [LARGE SCALE ANALYSIS]</scope>
</reference>
<comment type="function">
    <text>May be involved in transcriptional regulation.</text>
</comment>
<comment type="subcellular location">
    <subcellularLocation>
        <location evidence="7">Nucleus</location>
    </subcellularLocation>
</comment>
<comment type="alternative products">
    <event type="alternative splicing"/>
    <isoform>
        <id>P17035-1</id>
        <name>1</name>
        <sequence type="displayed"/>
    </isoform>
    <isoform>
        <id>P17035-2</id>
        <name>2</name>
        <sequence type="described" ref="VSP_029007"/>
    </isoform>
</comment>
<comment type="similarity">
    <text evidence="7">Belongs to the krueppel C2H2-type zinc-finger protein family.</text>
</comment>
<comment type="sequence caution" evidence="7">
    <conflict type="erroneous initiation">
        <sequence resource="EMBL-CDS" id="BAD18706"/>
    </conflict>
    <text>Truncated N-terminus.</text>
</comment>
<accession>P17035</accession>
<accession>A8KAK9</accession>
<accession>B4E3G0</accession>
<accession>B9EIK7</accession>
<accession>Q5H9V1</accession>
<accession>Q5HYM9</accession>
<accession>Q6ZML9</accession>
<accession>Q6ZN56</accession>
<organism>
    <name type="scientific">Homo sapiens</name>
    <name type="common">Human</name>
    <dbReference type="NCBI Taxonomy" id="9606"/>
    <lineage>
        <taxon>Eukaryota</taxon>
        <taxon>Metazoa</taxon>
        <taxon>Chordata</taxon>
        <taxon>Craniata</taxon>
        <taxon>Vertebrata</taxon>
        <taxon>Euteleostomi</taxon>
        <taxon>Mammalia</taxon>
        <taxon>Eutheria</taxon>
        <taxon>Euarchontoglires</taxon>
        <taxon>Primates</taxon>
        <taxon>Haplorrhini</taxon>
        <taxon>Catarrhini</taxon>
        <taxon>Hominidae</taxon>
        <taxon>Homo</taxon>
    </lineage>
</organism>
<feature type="chain" id="PRO_0000047357" description="Zinc finger protein 28">
    <location>
        <begin position="1"/>
        <end position="718"/>
    </location>
</feature>
<feature type="domain" description="KRAB" evidence="2">
    <location>
        <begin position="8"/>
        <end position="81"/>
    </location>
</feature>
<feature type="zinc finger region" description="C2H2-type 1; degenerate" evidence="1">
    <location>
        <begin position="215"/>
        <end position="237"/>
    </location>
</feature>
<feature type="zinc finger region" description="C2H2-type 2; degenerate" evidence="1">
    <location>
        <begin position="243"/>
        <end position="265"/>
    </location>
</feature>
<feature type="zinc finger region" description="C2H2-type 3" evidence="1">
    <location>
        <begin position="271"/>
        <end position="293"/>
    </location>
</feature>
<feature type="zinc finger region" description="C2H2-type 4; degenerate" evidence="1">
    <location>
        <begin position="299"/>
        <end position="321"/>
    </location>
</feature>
<feature type="zinc finger region" description="C2H2-type 5" evidence="1">
    <location>
        <begin position="327"/>
        <end position="349"/>
    </location>
</feature>
<feature type="zinc finger region" description="C2H2-type 6" evidence="1">
    <location>
        <begin position="355"/>
        <end position="377"/>
    </location>
</feature>
<feature type="zinc finger region" description="C2H2-type 7" evidence="1">
    <location>
        <begin position="383"/>
        <end position="405"/>
    </location>
</feature>
<feature type="zinc finger region" description="C2H2-type 8" evidence="1">
    <location>
        <begin position="411"/>
        <end position="433"/>
    </location>
</feature>
<feature type="zinc finger region" description="C2H2-type 9" evidence="1">
    <location>
        <begin position="439"/>
        <end position="461"/>
    </location>
</feature>
<feature type="zinc finger region" description="C2H2-type 10" evidence="1">
    <location>
        <begin position="467"/>
        <end position="489"/>
    </location>
</feature>
<feature type="zinc finger region" description="C2H2-type 11" evidence="1">
    <location>
        <begin position="495"/>
        <end position="517"/>
    </location>
</feature>
<feature type="zinc finger region" description="C2H2-type 12" evidence="1">
    <location>
        <begin position="523"/>
        <end position="545"/>
    </location>
</feature>
<feature type="zinc finger region" description="C2H2-type 13" evidence="1">
    <location>
        <begin position="551"/>
        <end position="573"/>
    </location>
</feature>
<feature type="zinc finger region" description="C2H2-type 14" evidence="1">
    <location>
        <begin position="579"/>
        <end position="601"/>
    </location>
</feature>
<feature type="zinc finger region" description="C2H2-type 15" evidence="1">
    <location>
        <begin position="607"/>
        <end position="629"/>
    </location>
</feature>
<feature type="zinc finger region" description="C2H2-type 16" evidence="1">
    <location>
        <begin position="635"/>
        <end position="657"/>
    </location>
</feature>
<feature type="zinc finger region" description="C2H2-type 17" evidence="1">
    <location>
        <begin position="663"/>
        <end position="685"/>
    </location>
</feature>
<feature type="zinc finger region" description="C2H2-type 18" evidence="1">
    <location>
        <begin position="691"/>
        <end position="713"/>
    </location>
</feature>
<feature type="cross-link" description="Glycyl lysine isopeptide (Lys-Gly) (interchain with G-Cter in SUMO2)" evidence="8">
    <location>
        <position position="89"/>
    </location>
</feature>
<feature type="cross-link" description="Glycyl lysine isopeptide (Lys-Gly) (interchain with G-Cter in SUMO2)" evidence="8">
    <location>
        <position position="428"/>
    </location>
</feature>
<feature type="splice variant" id="VSP_029007" description="In isoform 2." evidence="5 6">
    <location>
        <begin position="1"/>
        <end position="53"/>
    </location>
</feature>
<feature type="sequence variant" id="VAR_036841" description="In dbSNP:rs13382164.">
    <original>R</original>
    <variation>G</variation>
    <location>
        <position position="179"/>
    </location>
</feature>
<feature type="sequence variant" id="VAR_036842" description="In dbSNP:rs10417163." evidence="3 4">
    <original>K</original>
    <variation>Q</variation>
    <location>
        <position position="465"/>
    </location>
</feature>
<feature type="sequence variant" id="VAR_036843" description="In dbSNP:rs8107444." evidence="3 4">
    <original>M</original>
    <variation>T</variation>
    <location>
        <position position="524"/>
    </location>
</feature>
<feature type="sequence conflict" description="In Ref. 1; BAD18519." evidence="7" ref="1">
    <original>N</original>
    <variation>D</variation>
    <location>
        <position position="65"/>
    </location>
</feature>
<feature type="sequence conflict" description="In Ref. 1; BAF85763." evidence="7" ref="1">
    <original>M</original>
    <variation>T</variation>
    <location>
        <position position="113"/>
    </location>
</feature>
<feature type="sequence conflict" description="In Ref. 2; CAI46258." evidence="7" ref="2">
    <original>C</original>
    <variation>G</variation>
    <location>
        <position position="273"/>
    </location>
</feature>
<feature type="sequence conflict" description="In Ref. 2; CAI45923." evidence="7" ref="2">
    <original>K</original>
    <variation>E</variation>
    <location>
        <position position="325"/>
    </location>
</feature>
<feature type="sequence conflict" description="In Ref. 1; BAD18706 and 2; CAI46258." evidence="7" ref="1 2">
    <original>R</original>
    <variation>T</variation>
    <location>
        <position position="403"/>
    </location>
</feature>
<feature type="sequence conflict" description="In Ref. 1; BAG65472." evidence="7" ref="1">
    <original>K</original>
    <variation>E</variation>
    <location>
        <position position="412"/>
    </location>
</feature>
<feature type="sequence conflict" description="In Ref. 2; CAI46258." evidence="7" ref="2">
    <original>K</original>
    <variation>R</variation>
    <location>
        <position position="418"/>
    </location>
</feature>
<feature type="sequence conflict" description="In Ref. 2; CAI45923." evidence="7" ref="2">
    <original>K</original>
    <variation>T</variation>
    <location>
        <position position="498"/>
    </location>
</feature>
<proteinExistence type="evidence at protein level"/>
<name>ZNF28_HUMAN</name>
<keyword id="KW-0025">Alternative splicing</keyword>
<keyword id="KW-0238">DNA-binding</keyword>
<keyword id="KW-1017">Isopeptide bond</keyword>
<keyword id="KW-0479">Metal-binding</keyword>
<keyword id="KW-0539">Nucleus</keyword>
<keyword id="KW-1267">Proteomics identification</keyword>
<keyword id="KW-1185">Reference proteome</keyword>
<keyword id="KW-0677">Repeat</keyword>
<keyword id="KW-0804">Transcription</keyword>
<keyword id="KW-0805">Transcription regulation</keyword>
<keyword id="KW-0832">Ubl conjugation</keyword>
<keyword id="KW-0862">Zinc</keyword>
<keyword id="KW-0863">Zinc-finger</keyword>